<feature type="chain" id="PRO_0000168481" description="L-lactate dehydrogenase C chain">
    <location>
        <begin position="1"/>
        <end position="332"/>
    </location>
</feature>
<feature type="active site" description="Proton acceptor" evidence="1">
    <location>
        <position position="193"/>
    </location>
</feature>
<feature type="binding site" evidence="1">
    <location>
        <begin position="29"/>
        <end position="57"/>
    </location>
    <ligand>
        <name>NAD(+)</name>
        <dbReference type="ChEBI" id="CHEBI:57540"/>
    </ligand>
</feature>
<feature type="binding site" evidence="1">
    <location>
        <position position="99"/>
    </location>
    <ligand>
        <name>NAD(+)</name>
        <dbReference type="ChEBI" id="CHEBI:57540"/>
    </ligand>
</feature>
<feature type="binding site" evidence="1">
    <location>
        <position position="106"/>
    </location>
    <ligand>
        <name>substrate</name>
    </ligand>
</feature>
<feature type="binding site" evidence="1">
    <location>
        <position position="138"/>
    </location>
    <ligand>
        <name>NAD(+)</name>
        <dbReference type="ChEBI" id="CHEBI:57540"/>
    </ligand>
</feature>
<feature type="binding site" evidence="1">
    <location>
        <position position="138"/>
    </location>
    <ligand>
        <name>substrate</name>
    </ligand>
</feature>
<feature type="binding site" evidence="1">
    <location>
        <position position="169"/>
    </location>
    <ligand>
        <name>substrate</name>
    </ligand>
</feature>
<feature type="binding site" evidence="1">
    <location>
        <position position="248"/>
    </location>
    <ligand>
        <name>substrate</name>
    </ligand>
</feature>
<feature type="modified residue" description="Phosphoserine" evidence="2">
    <location>
        <position position="301"/>
    </location>
</feature>
<reference key="1">
    <citation type="submission" date="1997-03" db="EMBL/GenBank/DDBJ databases">
        <title>Pig LDH-C mRNA complete sequence.</title>
        <authorList>
            <person name="Li S.S.-L."/>
            <person name="Huang H.-W."/>
        </authorList>
    </citation>
    <scope>NUCLEOTIDE SEQUENCE [MRNA]</scope>
</reference>
<gene>
    <name type="primary">LDHC</name>
</gene>
<proteinExistence type="evidence at transcript level"/>
<accession>Q9TSX5</accession>
<dbReference type="EC" id="1.1.1.27"/>
<dbReference type="EMBL" id="U95378">
    <property type="protein sequence ID" value="AAF22363.1"/>
    <property type="molecule type" value="mRNA"/>
</dbReference>
<dbReference type="RefSeq" id="NP_001182704.1">
    <property type="nucleotide sequence ID" value="NM_001195775.1"/>
</dbReference>
<dbReference type="SMR" id="Q9TSX5"/>
<dbReference type="FunCoup" id="Q9TSX5">
    <property type="interactions" value="78"/>
</dbReference>
<dbReference type="STRING" id="9823.ENSSSCP00000014199"/>
<dbReference type="PaxDb" id="9823-ENSSSCP00000014199"/>
<dbReference type="PeptideAtlas" id="Q9TSX5"/>
<dbReference type="GeneID" id="100502559"/>
<dbReference type="KEGG" id="ssc:100502559"/>
<dbReference type="CTD" id="3948"/>
<dbReference type="eggNOG" id="KOG1495">
    <property type="taxonomic scope" value="Eukaryota"/>
</dbReference>
<dbReference type="InParanoid" id="Q9TSX5"/>
<dbReference type="OrthoDB" id="5405561at2759"/>
<dbReference type="UniPathway" id="UPA00554">
    <property type="reaction ID" value="UER00611"/>
</dbReference>
<dbReference type="ChiTaRS" id="LDHC">
    <property type="organism name" value="pig"/>
</dbReference>
<dbReference type="Proteomes" id="UP000008227">
    <property type="component" value="Unplaced"/>
</dbReference>
<dbReference type="Proteomes" id="UP000314985">
    <property type="component" value="Unplaced"/>
</dbReference>
<dbReference type="Proteomes" id="UP000694570">
    <property type="component" value="Unplaced"/>
</dbReference>
<dbReference type="Proteomes" id="UP000694571">
    <property type="component" value="Unplaced"/>
</dbReference>
<dbReference type="Proteomes" id="UP000694720">
    <property type="component" value="Unplaced"/>
</dbReference>
<dbReference type="Proteomes" id="UP000694722">
    <property type="component" value="Unplaced"/>
</dbReference>
<dbReference type="Proteomes" id="UP000694723">
    <property type="component" value="Unplaced"/>
</dbReference>
<dbReference type="Proteomes" id="UP000694724">
    <property type="component" value="Unplaced"/>
</dbReference>
<dbReference type="Proteomes" id="UP000694725">
    <property type="component" value="Unplaced"/>
</dbReference>
<dbReference type="Proteomes" id="UP000694726">
    <property type="component" value="Unplaced"/>
</dbReference>
<dbReference type="Proteomes" id="UP000694727">
    <property type="component" value="Unplaced"/>
</dbReference>
<dbReference type="Proteomes" id="UP000694728">
    <property type="component" value="Unplaced"/>
</dbReference>
<dbReference type="GO" id="GO:0005739">
    <property type="term" value="C:mitochondrion"/>
    <property type="evidence" value="ECO:0000318"/>
    <property type="project" value="GO_Central"/>
</dbReference>
<dbReference type="GO" id="GO:0004459">
    <property type="term" value="F:L-lactate dehydrogenase activity"/>
    <property type="evidence" value="ECO:0000318"/>
    <property type="project" value="GO_Central"/>
</dbReference>
<dbReference type="GO" id="GO:0006089">
    <property type="term" value="P:lactate metabolic process"/>
    <property type="evidence" value="ECO:0000318"/>
    <property type="project" value="GO_Central"/>
</dbReference>
<dbReference type="GO" id="GO:0006090">
    <property type="term" value="P:pyruvate metabolic process"/>
    <property type="evidence" value="ECO:0000318"/>
    <property type="project" value="GO_Central"/>
</dbReference>
<dbReference type="CDD" id="cd05293">
    <property type="entry name" value="LDH_1"/>
    <property type="match status" value="1"/>
</dbReference>
<dbReference type="FunFam" id="3.40.50.720:FF:000029">
    <property type="entry name" value="L-lactate dehydrogenase A chain"/>
    <property type="match status" value="1"/>
</dbReference>
<dbReference type="FunFam" id="3.90.110.10:FF:000003">
    <property type="entry name" value="L-lactate dehydrogenase A chain"/>
    <property type="match status" value="1"/>
</dbReference>
<dbReference type="Gene3D" id="3.90.110.10">
    <property type="entry name" value="Lactate dehydrogenase/glycoside hydrolase, family 4, C-terminal"/>
    <property type="match status" value="1"/>
</dbReference>
<dbReference type="Gene3D" id="3.40.50.720">
    <property type="entry name" value="NAD(P)-binding Rossmann-like Domain"/>
    <property type="match status" value="1"/>
</dbReference>
<dbReference type="HAMAP" id="MF_00488">
    <property type="entry name" value="Lactate_dehydrog"/>
    <property type="match status" value="1"/>
</dbReference>
<dbReference type="InterPro" id="IPR001557">
    <property type="entry name" value="L-lactate/malate_DH"/>
</dbReference>
<dbReference type="InterPro" id="IPR011304">
    <property type="entry name" value="L-lactate_DH"/>
</dbReference>
<dbReference type="InterPro" id="IPR018177">
    <property type="entry name" value="L-lactate_DH_AS"/>
</dbReference>
<dbReference type="InterPro" id="IPR022383">
    <property type="entry name" value="Lactate/malate_DH_C"/>
</dbReference>
<dbReference type="InterPro" id="IPR001236">
    <property type="entry name" value="Lactate/malate_DH_N"/>
</dbReference>
<dbReference type="InterPro" id="IPR015955">
    <property type="entry name" value="Lactate_DH/Glyco_Ohase_4_C"/>
</dbReference>
<dbReference type="InterPro" id="IPR036291">
    <property type="entry name" value="NAD(P)-bd_dom_sf"/>
</dbReference>
<dbReference type="NCBIfam" id="TIGR01771">
    <property type="entry name" value="L-LDH-NAD"/>
    <property type="match status" value="1"/>
</dbReference>
<dbReference type="NCBIfam" id="NF000824">
    <property type="entry name" value="PRK00066.1"/>
    <property type="match status" value="1"/>
</dbReference>
<dbReference type="NCBIfam" id="NF004863">
    <property type="entry name" value="PRK06223.1"/>
    <property type="match status" value="1"/>
</dbReference>
<dbReference type="PANTHER" id="PTHR43128">
    <property type="entry name" value="L-2-HYDROXYCARBOXYLATE DEHYDROGENASE (NAD(P)(+))"/>
    <property type="match status" value="1"/>
</dbReference>
<dbReference type="PANTHER" id="PTHR43128:SF5">
    <property type="entry name" value="L-LACTATE DEHYDROGENASE C CHAIN"/>
    <property type="match status" value="1"/>
</dbReference>
<dbReference type="Pfam" id="PF02866">
    <property type="entry name" value="Ldh_1_C"/>
    <property type="match status" value="1"/>
</dbReference>
<dbReference type="Pfam" id="PF00056">
    <property type="entry name" value="Ldh_1_N"/>
    <property type="match status" value="1"/>
</dbReference>
<dbReference type="PIRSF" id="PIRSF000102">
    <property type="entry name" value="Lac_mal_DH"/>
    <property type="match status" value="1"/>
</dbReference>
<dbReference type="PRINTS" id="PR00086">
    <property type="entry name" value="LLDHDRGNASE"/>
</dbReference>
<dbReference type="SUPFAM" id="SSF56327">
    <property type="entry name" value="LDH C-terminal domain-like"/>
    <property type="match status" value="1"/>
</dbReference>
<dbReference type="SUPFAM" id="SSF51735">
    <property type="entry name" value="NAD(P)-binding Rossmann-fold domains"/>
    <property type="match status" value="1"/>
</dbReference>
<dbReference type="PROSITE" id="PS00064">
    <property type="entry name" value="L_LDH"/>
    <property type="match status" value="1"/>
</dbReference>
<evidence type="ECO:0000250" key="1"/>
<evidence type="ECO:0000250" key="2">
    <source>
        <dbReference type="UniProtKB" id="P07864"/>
    </source>
</evidence>
<evidence type="ECO:0000305" key="3"/>
<sequence length="332" mass="36053">MSTVKEQLIENLIEEDEVSQSKITIVGTGAVGMACAICILLKDLADELALVDVAVDKLKGETMDLQHGSLFFNTSKIVSGKDYSVSANSKIVIVTAGARQQEGESRLALVQRNVNIMKSIIPTIVQHSPDCKMLIVSNPVDILTYVAWKLSGLPATRVIGSGCNLDSARFRYLIGKKLGVHPTSCHGWIIGEHGDSSVPLWSGVNVAGVALKTLDPKLGTDSDKDQWKNIHKQVIGSAYEIIKLKGYTSWAIGLSVTDLVGSILKNLRRVHPVSTMVKGLYGIKEEIFLSIPCVLGRNGVSDIVKVNLNAEEEALFKKSANTLWNVQKDLTF</sequence>
<comment type="function">
    <text evidence="1">Possible role in sperm motility.</text>
</comment>
<comment type="catalytic activity">
    <reaction>
        <text>(S)-lactate + NAD(+) = pyruvate + NADH + H(+)</text>
        <dbReference type="Rhea" id="RHEA:23444"/>
        <dbReference type="ChEBI" id="CHEBI:15361"/>
        <dbReference type="ChEBI" id="CHEBI:15378"/>
        <dbReference type="ChEBI" id="CHEBI:16651"/>
        <dbReference type="ChEBI" id="CHEBI:57540"/>
        <dbReference type="ChEBI" id="CHEBI:57945"/>
        <dbReference type="EC" id="1.1.1.27"/>
    </reaction>
</comment>
<comment type="pathway">
    <text>Fermentation; pyruvate fermentation to lactate; (S)-lactate from pyruvate: step 1/1.</text>
</comment>
<comment type="subunit">
    <text evidence="1">Homotetramer. Interacts with RABL2/RABL2A; binds preferentially to GTP-bound RABL2.</text>
</comment>
<comment type="subcellular location">
    <subcellularLocation>
        <location evidence="1">Cytoplasm</location>
    </subcellularLocation>
</comment>
<comment type="similarity">
    <text evidence="3">Belongs to the LDH/MDH superfamily. LDH family.</text>
</comment>
<keyword id="KW-0963">Cytoplasm</keyword>
<keyword id="KW-0520">NAD</keyword>
<keyword id="KW-0560">Oxidoreductase</keyword>
<keyword id="KW-0597">Phosphoprotein</keyword>
<keyword id="KW-1185">Reference proteome</keyword>
<organism>
    <name type="scientific">Sus scrofa</name>
    <name type="common">Pig</name>
    <dbReference type="NCBI Taxonomy" id="9823"/>
    <lineage>
        <taxon>Eukaryota</taxon>
        <taxon>Metazoa</taxon>
        <taxon>Chordata</taxon>
        <taxon>Craniata</taxon>
        <taxon>Vertebrata</taxon>
        <taxon>Euteleostomi</taxon>
        <taxon>Mammalia</taxon>
        <taxon>Eutheria</taxon>
        <taxon>Laurasiatheria</taxon>
        <taxon>Artiodactyla</taxon>
        <taxon>Suina</taxon>
        <taxon>Suidae</taxon>
        <taxon>Sus</taxon>
    </lineage>
</organism>
<name>LDHC_PIG</name>
<protein>
    <recommendedName>
        <fullName>L-lactate dehydrogenase C chain</fullName>
        <shortName>LDH-C</shortName>
        <ecNumber>1.1.1.27</ecNumber>
    </recommendedName>
    <alternativeName>
        <fullName>LDH testis subunit</fullName>
    </alternativeName>
    <alternativeName>
        <fullName>LDH-X</fullName>
    </alternativeName>
</protein>